<dbReference type="EMBL" id="CP000703">
    <property type="protein sequence ID" value="ABQ48748.1"/>
    <property type="molecule type" value="Genomic_DNA"/>
</dbReference>
<dbReference type="RefSeq" id="WP_001016306.1">
    <property type="nucleotide sequence ID" value="NC_009487.1"/>
</dbReference>
<dbReference type="SMR" id="A5IRC5"/>
<dbReference type="KEGG" id="saj:SaurJH9_0947"/>
<dbReference type="HOGENOM" id="CLU_125825_1_3_9"/>
<dbReference type="GO" id="GO:0005886">
    <property type="term" value="C:plasma membrane"/>
    <property type="evidence" value="ECO:0007669"/>
    <property type="project" value="UniProtKB-SubCell"/>
</dbReference>
<dbReference type="GO" id="GO:0015385">
    <property type="term" value="F:sodium:proton antiporter activity"/>
    <property type="evidence" value="ECO:0007669"/>
    <property type="project" value="TreeGrafter"/>
</dbReference>
<dbReference type="InterPro" id="IPR007208">
    <property type="entry name" value="MrpF/PhaF-like"/>
</dbReference>
<dbReference type="NCBIfam" id="NF009248">
    <property type="entry name" value="PRK12600.1"/>
    <property type="match status" value="1"/>
</dbReference>
<dbReference type="PANTHER" id="PTHR34702">
    <property type="entry name" value="NA(+)/H(+) ANTIPORTER SUBUNIT F1"/>
    <property type="match status" value="1"/>
</dbReference>
<dbReference type="PANTHER" id="PTHR34702:SF1">
    <property type="entry name" value="NA(+)_H(+) ANTIPORTER SUBUNIT F"/>
    <property type="match status" value="1"/>
</dbReference>
<dbReference type="Pfam" id="PF04066">
    <property type="entry name" value="MrpF_PhaF"/>
    <property type="match status" value="1"/>
</dbReference>
<dbReference type="PIRSF" id="PIRSF028784">
    <property type="entry name" value="MrpF"/>
    <property type="match status" value="1"/>
</dbReference>
<proteinExistence type="inferred from homology"/>
<accession>A5IRC5</accession>
<sequence>MNHNVIIVIALIIVVISMLAMLIRVVLGPSLADRVVALDAIGLQLMAVIALFSILLNIKYMIVVIMMIGILAFLGTAVFSKFMDKGKVIEHDQNHTD</sequence>
<evidence type="ECO:0000250" key="1"/>
<evidence type="ECO:0000255" key="2"/>
<evidence type="ECO:0000305" key="3"/>
<comment type="function">
    <text evidence="1">Mnh complex is a Na(+)/H(+) antiporter involved in Na(+) excretion.</text>
</comment>
<comment type="subunit">
    <text evidence="1">May form a heterooligomeric complex that consists of seven subunits: mnhA1, mnhB1, mnhC1, mnhD1, mnhE1, mnhF1 and mnhG1.</text>
</comment>
<comment type="subcellular location">
    <subcellularLocation>
        <location evidence="3">Cell membrane</location>
        <topology evidence="3">Multi-pass membrane protein</topology>
    </subcellularLocation>
</comment>
<comment type="similarity">
    <text evidence="3">Belongs to the CPA3 antiporters (TC 2.A.63) subunit F family.</text>
</comment>
<keyword id="KW-0050">Antiport</keyword>
<keyword id="KW-1003">Cell membrane</keyword>
<keyword id="KW-0375">Hydrogen ion transport</keyword>
<keyword id="KW-0406">Ion transport</keyword>
<keyword id="KW-0472">Membrane</keyword>
<keyword id="KW-0915">Sodium</keyword>
<keyword id="KW-0739">Sodium transport</keyword>
<keyword id="KW-0812">Transmembrane</keyword>
<keyword id="KW-1133">Transmembrane helix</keyword>
<keyword id="KW-0813">Transport</keyword>
<gene>
    <name type="primary">mnhF1</name>
    <name type="ordered locus">SaurJH9_0947</name>
</gene>
<reference key="1">
    <citation type="submission" date="2007-05" db="EMBL/GenBank/DDBJ databases">
        <title>Complete sequence of chromosome of Staphylococcus aureus subsp. aureus JH9.</title>
        <authorList>
            <consortium name="US DOE Joint Genome Institute"/>
            <person name="Copeland A."/>
            <person name="Lucas S."/>
            <person name="Lapidus A."/>
            <person name="Barry K."/>
            <person name="Detter J.C."/>
            <person name="Glavina del Rio T."/>
            <person name="Hammon N."/>
            <person name="Israni S."/>
            <person name="Pitluck S."/>
            <person name="Chain P."/>
            <person name="Malfatti S."/>
            <person name="Shin M."/>
            <person name="Vergez L."/>
            <person name="Schmutz J."/>
            <person name="Larimer F."/>
            <person name="Land M."/>
            <person name="Hauser L."/>
            <person name="Kyrpides N."/>
            <person name="Kim E."/>
            <person name="Tomasz A."/>
            <person name="Richardson P."/>
        </authorList>
    </citation>
    <scope>NUCLEOTIDE SEQUENCE [LARGE SCALE GENOMIC DNA]</scope>
    <source>
        <strain>JH9</strain>
    </source>
</reference>
<feature type="chain" id="PRO_5000247237" description="Na(+)/H(+) antiporter subunit F1">
    <location>
        <begin position="1"/>
        <end position="97"/>
    </location>
</feature>
<feature type="transmembrane region" description="Helical" evidence="2">
    <location>
        <begin position="3"/>
        <end position="23"/>
    </location>
</feature>
<feature type="transmembrane region" description="Helical" evidence="2">
    <location>
        <begin position="35"/>
        <end position="55"/>
    </location>
</feature>
<feature type="transmembrane region" description="Helical" evidence="2">
    <location>
        <begin position="60"/>
        <end position="80"/>
    </location>
</feature>
<organism>
    <name type="scientific">Staphylococcus aureus (strain JH9)</name>
    <dbReference type="NCBI Taxonomy" id="359786"/>
    <lineage>
        <taxon>Bacteria</taxon>
        <taxon>Bacillati</taxon>
        <taxon>Bacillota</taxon>
        <taxon>Bacilli</taxon>
        <taxon>Bacillales</taxon>
        <taxon>Staphylococcaceae</taxon>
        <taxon>Staphylococcus</taxon>
    </lineage>
</organism>
<name>MNHF1_STAA9</name>
<protein>
    <recommendedName>
        <fullName>Na(+)/H(+) antiporter subunit F1</fullName>
    </recommendedName>
    <alternativeName>
        <fullName>Mnh complex subunit F1</fullName>
    </alternativeName>
</protein>